<protein>
    <recommendedName>
        <fullName evidence="1 3">RuBisCO accumulation factor 1</fullName>
    </recommendedName>
</protein>
<keyword id="KW-0120">Carbon dioxide fixation</keyword>
<keyword id="KW-0143">Chaperone</keyword>
<keyword id="KW-0963">Cytoplasm</keyword>
<keyword id="KW-0602">Photosynthesis</keyword>
<keyword id="KW-1185">Reference proteome</keyword>
<dbReference type="EMBL" id="BA000022">
    <property type="protein sequence ID" value="BAA10636.1"/>
    <property type="molecule type" value="Genomic_DNA"/>
</dbReference>
<dbReference type="PIR" id="S76692">
    <property type="entry name" value="S76692"/>
</dbReference>
<dbReference type="SMR" id="Q55875"/>
<dbReference type="DIP" id="DIP-48799N"/>
<dbReference type="IntAct" id="Q55875">
    <property type="interactions" value="2"/>
</dbReference>
<dbReference type="STRING" id="1148.gene:10500140"/>
<dbReference type="PaxDb" id="1148-1208468"/>
<dbReference type="EnsemblBacteria" id="BAA10636">
    <property type="protein sequence ID" value="BAA10636"/>
    <property type="gene ID" value="BAA10636"/>
</dbReference>
<dbReference type="KEGG" id="syn:sll0102"/>
<dbReference type="eggNOG" id="ENOG502Z7IG">
    <property type="taxonomic scope" value="Bacteria"/>
</dbReference>
<dbReference type="InParanoid" id="Q55875"/>
<dbReference type="PhylomeDB" id="Q55875"/>
<dbReference type="Proteomes" id="UP000001425">
    <property type="component" value="Chromosome"/>
</dbReference>
<dbReference type="GO" id="GO:0005737">
    <property type="term" value="C:cytoplasm"/>
    <property type="evidence" value="ECO:0007669"/>
    <property type="project" value="UniProtKB-SubCell"/>
</dbReference>
<dbReference type="GO" id="GO:0015977">
    <property type="term" value="P:carbon fixation"/>
    <property type="evidence" value="ECO:0007669"/>
    <property type="project" value="UniProtKB-UniRule"/>
</dbReference>
<dbReference type="GO" id="GO:0015979">
    <property type="term" value="P:photosynthesis"/>
    <property type="evidence" value="ECO:0007669"/>
    <property type="project" value="UniProtKB-KW"/>
</dbReference>
<dbReference type="GO" id="GO:0110102">
    <property type="term" value="P:ribulose bisphosphate carboxylase complex assembly"/>
    <property type="evidence" value="ECO:0007669"/>
    <property type="project" value="UniProtKB-UniRule"/>
</dbReference>
<dbReference type="HAMAP" id="MF_00856">
    <property type="entry name" value="Raf1"/>
    <property type="match status" value="1"/>
</dbReference>
<dbReference type="InterPro" id="IPR037494">
    <property type="entry name" value="RAF1"/>
</dbReference>
<dbReference type="InterPro" id="IPR040858">
    <property type="entry name" value="Raf1_C"/>
</dbReference>
<dbReference type="InterPro" id="IPR046382">
    <property type="entry name" value="Raf1_cyn"/>
</dbReference>
<dbReference type="InterPro" id="IPR040781">
    <property type="entry name" value="Raf1_HTH"/>
</dbReference>
<dbReference type="InterPro" id="IPR041358">
    <property type="entry name" value="Raf1_N"/>
</dbReference>
<dbReference type="PANTHER" id="PTHR35299">
    <property type="entry name" value="RUBISCO ACCUMULATION FACTOR 1"/>
    <property type="match status" value="1"/>
</dbReference>
<dbReference type="PANTHER" id="PTHR35299:SF6">
    <property type="entry name" value="RUBISCO ACCUMULATION FACTOR 1"/>
    <property type="match status" value="1"/>
</dbReference>
<dbReference type="Pfam" id="PF18579">
    <property type="entry name" value="Raf1_HTH"/>
    <property type="match status" value="1"/>
</dbReference>
<dbReference type="Pfam" id="PF18578">
    <property type="entry name" value="Raf1_N"/>
    <property type="match status" value="1"/>
</dbReference>
<dbReference type="Pfam" id="PF18087">
    <property type="entry name" value="RuBisCo_chap_C"/>
    <property type="match status" value="1"/>
</dbReference>
<comment type="function">
    <text evidence="1">A major RuBisCO chaperone. Acts after GroEL-GroES chaperonin to fold and/or assemble the large subunit of RuBisCO (ccbL, rbcL). Cooperates with RbcX in RbcL folding, plays the major role in assembly of dimers into RbcL(8)-Raf1(8) intermediate complexes. RbcS replaces Raf1, leading to holoenzyme formation.</text>
</comment>
<comment type="function">
    <text evidence="2 4">Required for optimal reconstitution of RbcL(8) upon expression in E.coli (PubMed:28108864). Has been suggested to be involved in RuBisCO recycling and homeostasis rather than assembly (Probable).</text>
</comment>
<comment type="subunit">
    <text evidence="1 2">Homodimer. Forms an RbcL(8)-Raf1(8) complex. Forms complexes of many stoichiometries with RbcL with and without RbcS. RbcX and Raf1 can bind simultaneously to RbcL (By similarity). Interacts with both RuBisCO subunits (ccbL, ccbS), GroEL, DnaK and alpha and beta phycocyanin (cpcA, cpcB) in pull-down experiments with tagged protein. C-terminally tagged Raf1 does not interact with either RuBisCO subunit, suggesting its C-terminus is involved in binding (PubMed:28108864).</text>
</comment>
<comment type="subcellular location">
    <subcellularLocation>
        <location evidence="1">Cytoplasm</location>
    </subcellularLocation>
</comment>
<comment type="domain">
    <text evidence="1">Has 3 domains, the N-terminal alpha-helical domain, an extended flexible linker and the C-terminal beta-sheet domain. The 2 C-terminal beta-sheet domains are swapped and pack against each other to form the dimer interface.</text>
</comment>
<comment type="disruption phenotype">
    <text evidence="2">No visible phenotype under normal growth conditions, no change in RuBisCO large subunit levels, no change in RuBisCO carboxylase activity. During sulfur starvation deletion cells are protected against protein degradation.</text>
</comment>
<comment type="similarity">
    <text evidence="1">Belongs to the RAF family.</text>
</comment>
<proteinExistence type="evidence at protein level"/>
<reference key="1">
    <citation type="journal article" date="1996" name="DNA Res.">
        <title>Sequence analysis of the genome of the unicellular cyanobacterium Synechocystis sp. strain PCC6803. II. Sequence determination of the entire genome and assignment of potential protein-coding regions.</title>
        <authorList>
            <person name="Kaneko T."/>
            <person name="Sato S."/>
            <person name="Kotani H."/>
            <person name="Tanaka A."/>
            <person name="Asamizu E."/>
            <person name="Nakamura Y."/>
            <person name="Miyajima N."/>
            <person name="Hirosawa M."/>
            <person name="Sugiura M."/>
            <person name="Sasamoto S."/>
            <person name="Kimura T."/>
            <person name="Hosouchi T."/>
            <person name="Matsuno A."/>
            <person name="Muraki A."/>
            <person name="Nakazaki N."/>
            <person name="Naruo K."/>
            <person name="Okumura S."/>
            <person name="Shimpo S."/>
            <person name="Takeuchi C."/>
            <person name="Wada T."/>
            <person name="Watanabe A."/>
            <person name="Yamada M."/>
            <person name="Yasuda M."/>
            <person name="Tabata S."/>
        </authorList>
    </citation>
    <scope>NUCLEOTIDE SEQUENCE [LARGE SCALE GENOMIC DNA]</scope>
    <source>
        <strain>ATCC 27184 / PCC 6803 / Kazusa</strain>
    </source>
</reference>
<reference key="2">
    <citation type="journal article" date="2017" name="Photosyn. Res.">
        <title>Is RAF1 protein from Synechocystis sp. PCC 6803 really needed in the cyanobacterial Rubisco assembly process?</title>
        <authorList>
            <person name="Kolesinski P."/>
            <person name="Rydzy M."/>
            <person name="Szczepaniak A."/>
        </authorList>
    </citation>
    <scope>POSSIBLE FUNCTION</scope>
    <scope>SUBUNIT</scope>
    <scope>DISRUPTION PHENOTYPE</scope>
    <source>
        <strain>ATCC 27184 / PCC 6803 / Kazusa</strain>
    </source>
</reference>
<reference key="3">
    <citation type="journal article" date="2017" name="Photosyn. Res.">
        <title>Is RAF1 protein from Synechocystis sp. PCC 6803 really needed in the cyanobacterial Rubisco assembly process?</title>
        <authorList>
            <person name="Kolesinski P."/>
            <person name="Rydzy M."/>
            <person name="Szczepaniak A."/>
        </authorList>
    </citation>
    <scope>ERRATUM OF PUBMED:28108864</scope>
</reference>
<gene>
    <name evidence="1 3" type="primary">raf1</name>
    <name type="ordered locus">sll0102</name>
</gene>
<evidence type="ECO:0000255" key="1">
    <source>
        <dbReference type="HAMAP-Rule" id="MF_00856"/>
    </source>
</evidence>
<evidence type="ECO:0000269" key="2">
    <source>
    </source>
</evidence>
<evidence type="ECO:0000303" key="3">
    <source>
    </source>
</evidence>
<evidence type="ECO:0000305" key="4">
    <source>
    </source>
</evidence>
<feature type="chain" id="PRO_0000451579" description="RuBisCO accumulation factor 1">
    <location>
        <begin position="1"/>
        <end position="358"/>
    </location>
</feature>
<feature type="region of interest" description="N-terminal alpha-helix" evidence="1">
    <location>
        <begin position="11"/>
        <end position="194"/>
    </location>
</feature>
<feature type="region of interest" description="C-terminal beta-sheet" evidence="1">
    <location>
        <begin position="218"/>
        <end position="344"/>
    </location>
</feature>
<accession>Q55875</accession>
<name>RAF1_SYNY3</name>
<organism>
    <name type="scientific">Synechocystis sp. (strain ATCC 27184 / PCC 6803 / Kazusa)</name>
    <dbReference type="NCBI Taxonomy" id="1111708"/>
    <lineage>
        <taxon>Bacteria</taxon>
        <taxon>Bacillati</taxon>
        <taxon>Cyanobacteriota</taxon>
        <taxon>Cyanophyceae</taxon>
        <taxon>Synechococcales</taxon>
        <taxon>Merismopediaceae</taxon>
        <taxon>Synechocystis</taxon>
    </lineage>
</organism>
<sequence>MTHSPESNPTVSAAEAAELIRSLLHKEGTWVDWGKKCQQLQKAGYGAEEIFEQSGFQKVQQNLVIVASQVYESLVKQGIDETVLSYYRGPKSDVLYELRILNHQQRAIAAVEAQQKNLAADEAKELAKAFQEFGYLSQLPEGFTDHPGDALAYQCWKLARQKKNLPERTRLIVKGLKFAHSPNARQAIEKLLTDLTAQPSRKAPLVPVFRLEEDQEAARLIPVAGTFPLQPQAVQAVQSLEQVEPFGLVSYQGEGAVVPVPQWQAILTAEDPVAIFCPAGQVSESLARKDEQVLVVVDRSKKIWNDGSYFLLNQGETVAIQWCETEPEREILAQVVLVLRPKKIFDANNLREPWQMDD</sequence>